<sequence length="78" mass="8701">MSTIEERVKKIIVEQLGVKEDEVKNSASFVEDLGADSLDTVELVMALEEEFDTEIPDEEAEKITTVQAAIDFINANQQ</sequence>
<name>ACP_YERPG</name>
<reference key="1">
    <citation type="journal article" date="2010" name="J. Bacteriol.">
        <title>Genome sequence of the deep-rooted Yersinia pestis strain Angola reveals new insights into the evolution and pangenome of the plague bacterium.</title>
        <authorList>
            <person name="Eppinger M."/>
            <person name="Worsham P.L."/>
            <person name="Nikolich M.P."/>
            <person name="Riley D.R."/>
            <person name="Sebastian Y."/>
            <person name="Mou S."/>
            <person name="Achtman M."/>
            <person name="Lindler L.E."/>
            <person name="Ravel J."/>
        </authorList>
    </citation>
    <scope>NUCLEOTIDE SEQUENCE [LARGE SCALE GENOMIC DNA]</scope>
    <source>
        <strain>Angola</strain>
    </source>
</reference>
<accession>A9R3P5</accession>
<gene>
    <name evidence="1" type="primary">acpP</name>
    <name type="ordered locus">YpAngola_A3498</name>
</gene>
<organism>
    <name type="scientific">Yersinia pestis bv. Antiqua (strain Angola)</name>
    <dbReference type="NCBI Taxonomy" id="349746"/>
    <lineage>
        <taxon>Bacteria</taxon>
        <taxon>Pseudomonadati</taxon>
        <taxon>Pseudomonadota</taxon>
        <taxon>Gammaproteobacteria</taxon>
        <taxon>Enterobacterales</taxon>
        <taxon>Yersiniaceae</taxon>
        <taxon>Yersinia</taxon>
    </lineage>
</organism>
<comment type="function">
    <text evidence="1">Carrier of the growing fatty acid chain in fatty acid biosynthesis.</text>
</comment>
<comment type="pathway">
    <text evidence="1">Lipid metabolism; fatty acid biosynthesis.</text>
</comment>
<comment type="subcellular location">
    <subcellularLocation>
        <location evidence="1">Cytoplasm</location>
    </subcellularLocation>
</comment>
<comment type="PTM">
    <text evidence="1">4'-phosphopantetheine is transferred from CoA to a specific serine of apo-ACP by AcpS. This modification is essential for activity because fatty acids are bound in thioester linkage to the sulfhydryl of the prosthetic group.</text>
</comment>
<comment type="similarity">
    <text evidence="1">Belongs to the acyl carrier protein (ACP) family.</text>
</comment>
<protein>
    <recommendedName>
        <fullName evidence="1">Acyl carrier protein</fullName>
        <shortName evidence="1">ACP</shortName>
    </recommendedName>
</protein>
<keyword id="KW-0963">Cytoplasm</keyword>
<keyword id="KW-0275">Fatty acid biosynthesis</keyword>
<keyword id="KW-0276">Fatty acid metabolism</keyword>
<keyword id="KW-0444">Lipid biosynthesis</keyword>
<keyword id="KW-0443">Lipid metabolism</keyword>
<keyword id="KW-0596">Phosphopantetheine</keyword>
<keyword id="KW-0597">Phosphoprotein</keyword>
<proteinExistence type="inferred from homology"/>
<feature type="chain" id="PRO_1000139080" description="Acyl carrier protein">
    <location>
        <begin position="1"/>
        <end position="78"/>
    </location>
</feature>
<feature type="domain" description="Carrier" evidence="2">
    <location>
        <begin position="2"/>
        <end position="77"/>
    </location>
</feature>
<feature type="modified residue" description="O-(pantetheine 4'-phosphoryl)serine" evidence="2">
    <location>
        <position position="37"/>
    </location>
</feature>
<dbReference type="EMBL" id="CP000901">
    <property type="protein sequence ID" value="ABX85810.1"/>
    <property type="molecule type" value="Genomic_DNA"/>
</dbReference>
<dbReference type="RefSeq" id="WP_002220787.1">
    <property type="nucleotide sequence ID" value="NZ_CP009935.1"/>
</dbReference>
<dbReference type="SMR" id="A9R3P5"/>
<dbReference type="GeneID" id="97455792"/>
<dbReference type="KEGG" id="ypg:YpAngola_A3498"/>
<dbReference type="PATRIC" id="fig|349746.12.peg.188"/>
<dbReference type="UniPathway" id="UPA00094"/>
<dbReference type="GO" id="GO:0005829">
    <property type="term" value="C:cytosol"/>
    <property type="evidence" value="ECO:0007669"/>
    <property type="project" value="TreeGrafter"/>
</dbReference>
<dbReference type="GO" id="GO:0016020">
    <property type="term" value="C:membrane"/>
    <property type="evidence" value="ECO:0007669"/>
    <property type="project" value="GOC"/>
</dbReference>
<dbReference type="GO" id="GO:0000035">
    <property type="term" value="F:acyl binding"/>
    <property type="evidence" value="ECO:0007669"/>
    <property type="project" value="TreeGrafter"/>
</dbReference>
<dbReference type="GO" id="GO:0000036">
    <property type="term" value="F:acyl carrier activity"/>
    <property type="evidence" value="ECO:0007669"/>
    <property type="project" value="UniProtKB-UniRule"/>
</dbReference>
<dbReference type="GO" id="GO:0009245">
    <property type="term" value="P:lipid A biosynthetic process"/>
    <property type="evidence" value="ECO:0007669"/>
    <property type="project" value="TreeGrafter"/>
</dbReference>
<dbReference type="FunFam" id="1.10.1200.10:FF:000001">
    <property type="entry name" value="Acyl carrier protein"/>
    <property type="match status" value="1"/>
</dbReference>
<dbReference type="Gene3D" id="1.10.1200.10">
    <property type="entry name" value="ACP-like"/>
    <property type="match status" value="1"/>
</dbReference>
<dbReference type="HAMAP" id="MF_01217">
    <property type="entry name" value="Acyl_carrier"/>
    <property type="match status" value="1"/>
</dbReference>
<dbReference type="InterPro" id="IPR003231">
    <property type="entry name" value="ACP"/>
</dbReference>
<dbReference type="InterPro" id="IPR036736">
    <property type="entry name" value="ACP-like_sf"/>
</dbReference>
<dbReference type="InterPro" id="IPR009081">
    <property type="entry name" value="PP-bd_ACP"/>
</dbReference>
<dbReference type="InterPro" id="IPR006162">
    <property type="entry name" value="Ppantetheine_attach_site"/>
</dbReference>
<dbReference type="NCBIfam" id="TIGR00517">
    <property type="entry name" value="acyl_carrier"/>
    <property type="match status" value="1"/>
</dbReference>
<dbReference type="NCBIfam" id="NF002148">
    <property type="entry name" value="PRK00982.1-2"/>
    <property type="match status" value="1"/>
</dbReference>
<dbReference type="NCBIfam" id="NF002149">
    <property type="entry name" value="PRK00982.1-3"/>
    <property type="match status" value="1"/>
</dbReference>
<dbReference type="NCBIfam" id="NF002150">
    <property type="entry name" value="PRK00982.1-4"/>
    <property type="match status" value="1"/>
</dbReference>
<dbReference type="NCBIfam" id="NF002151">
    <property type="entry name" value="PRK00982.1-5"/>
    <property type="match status" value="1"/>
</dbReference>
<dbReference type="PANTHER" id="PTHR20863">
    <property type="entry name" value="ACYL CARRIER PROTEIN"/>
    <property type="match status" value="1"/>
</dbReference>
<dbReference type="PANTHER" id="PTHR20863:SF76">
    <property type="entry name" value="CARRIER DOMAIN-CONTAINING PROTEIN"/>
    <property type="match status" value="1"/>
</dbReference>
<dbReference type="Pfam" id="PF00550">
    <property type="entry name" value="PP-binding"/>
    <property type="match status" value="1"/>
</dbReference>
<dbReference type="SUPFAM" id="SSF47336">
    <property type="entry name" value="ACP-like"/>
    <property type="match status" value="1"/>
</dbReference>
<dbReference type="PROSITE" id="PS50075">
    <property type="entry name" value="CARRIER"/>
    <property type="match status" value="1"/>
</dbReference>
<dbReference type="PROSITE" id="PS00012">
    <property type="entry name" value="PHOSPHOPANTETHEINE"/>
    <property type="match status" value="1"/>
</dbReference>
<evidence type="ECO:0000255" key="1">
    <source>
        <dbReference type="HAMAP-Rule" id="MF_01217"/>
    </source>
</evidence>
<evidence type="ECO:0000255" key="2">
    <source>
        <dbReference type="PROSITE-ProRule" id="PRU00258"/>
    </source>
</evidence>